<accession>O83466</accession>
<proteinExistence type="inferred from homology"/>
<protein>
    <recommendedName>
        <fullName evidence="1">Isoleucine--tRNA ligase</fullName>
        <ecNumber evidence="1">6.1.1.5</ecNumber>
    </recommendedName>
    <alternativeName>
        <fullName evidence="1">Isoleucyl-tRNA synthetase</fullName>
        <shortName evidence="1">IleRS</shortName>
    </alternativeName>
</protein>
<keyword id="KW-0030">Aminoacyl-tRNA synthetase</keyword>
<keyword id="KW-0067">ATP-binding</keyword>
<keyword id="KW-0963">Cytoplasm</keyword>
<keyword id="KW-0436">Ligase</keyword>
<keyword id="KW-0479">Metal-binding</keyword>
<keyword id="KW-0547">Nucleotide-binding</keyword>
<keyword id="KW-0648">Protein biosynthesis</keyword>
<keyword id="KW-1185">Reference proteome</keyword>
<keyword id="KW-0862">Zinc</keyword>
<comment type="function">
    <text evidence="1">Catalyzes the attachment of isoleucine to tRNA(Ile). As IleRS can inadvertently accommodate and process structurally similar amino acids such as valine, to avoid such errors it has two additional distinct tRNA(Ile)-dependent editing activities. One activity is designated as 'pretransfer' editing and involves the hydrolysis of activated Val-AMP. The other activity is designated 'posttransfer' editing and involves deacylation of mischarged Val-tRNA(Ile).</text>
</comment>
<comment type="catalytic activity">
    <reaction evidence="1">
        <text>tRNA(Ile) + L-isoleucine + ATP = L-isoleucyl-tRNA(Ile) + AMP + diphosphate</text>
        <dbReference type="Rhea" id="RHEA:11060"/>
        <dbReference type="Rhea" id="RHEA-COMP:9666"/>
        <dbReference type="Rhea" id="RHEA-COMP:9695"/>
        <dbReference type="ChEBI" id="CHEBI:30616"/>
        <dbReference type="ChEBI" id="CHEBI:33019"/>
        <dbReference type="ChEBI" id="CHEBI:58045"/>
        <dbReference type="ChEBI" id="CHEBI:78442"/>
        <dbReference type="ChEBI" id="CHEBI:78528"/>
        <dbReference type="ChEBI" id="CHEBI:456215"/>
        <dbReference type="EC" id="6.1.1.5"/>
    </reaction>
</comment>
<comment type="cofactor">
    <cofactor evidence="1">
        <name>Zn(2+)</name>
        <dbReference type="ChEBI" id="CHEBI:29105"/>
    </cofactor>
</comment>
<comment type="subunit">
    <text evidence="1">Monomer.</text>
</comment>
<comment type="subcellular location">
    <subcellularLocation>
        <location evidence="1">Cytoplasm</location>
    </subcellularLocation>
</comment>
<comment type="domain">
    <text evidence="1">IleRS has two distinct active sites: one for aminoacylation and one for editing. The misactivated valine is translocated from the active site to the editing site, which sterically excludes the correctly activated isoleucine. The single editing site contains two valyl binding pockets, one specific for each substrate (Val-AMP or Val-tRNA(Ile)).</text>
</comment>
<comment type="similarity">
    <text evidence="1">Belongs to the class-I aminoacyl-tRNA synthetase family. IleS type 2 subfamily.</text>
</comment>
<evidence type="ECO:0000255" key="1">
    <source>
        <dbReference type="HAMAP-Rule" id="MF_02003"/>
    </source>
</evidence>
<gene>
    <name evidence="1" type="primary">ileS</name>
    <name type="ordered locus">TP_0452</name>
</gene>
<reference key="1">
    <citation type="journal article" date="1998" name="Science">
        <title>Complete genome sequence of Treponema pallidum, the syphilis spirochete.</title>
        <authorList>
            <person name="Fraser C.M."/>
            <person name="Norris S.J."/>
            <person name="Weinstock G.M."/>
            <person name="White O."/>
            <person name="Sutton G.G."/>
            <person name="Dodson R.J."/>
            <person name="Gwinn M.L."/>
            <person name="Hickey E.K."/>
            <person name="Clayton R.A."/>
            <person name="Ketchum K.A."/>
            <person name="Sodergren E."/>
            <person name="Hardham J.M."/>
            <person name="McLeod M.P."/>
            <person name="Salzberg S.L."/>
            <person name="Peterson J.D."/>
            <person name="Khalak H.G."/>
            <person name="Richardson D.L."/>
            <person name="Howell J.K."/>
            <person name="Chidambaram M."/>
            <person name="Utterback T.R."/>
            <person name="McDonald L.A."/>
            <person name="Artiach P."/>
            <person name="Bowman C."/>
            <person name="Cotton M.D."/>
            <person name="Fujii C."/>
            <person name="Garland S.A."/>
            <person name="Hatch B."/>
            <person name="Horst K."/>
            <person name="Roberts K.M."/>
            <person name="Sandusky M."/>
            <person name="Weidman J.F."/>
            <person name="Smith H.O."/>
            <person name="Venter J.C."/>
        </authorList>
    </citation>
    <scope>NUCLEOTIDE SEQUENCE [LARGE SCALE GENOMIC DNA]</scope>
    <source>
        <strain>Nichols</strain>
    </source>
</reference>
<dbReference type="EC" id="6.1.1.5" evidence="1"/>
<dbReference type="EMBL" id="AE000520">
    <property type="protein sequence ID" value="AAC65439.1"/>
    <property type="molecule type" value="Genomic_DNA"/>
</dbReference>
<dbReference type="PIR" id="E71322">
    <property type="entry name" value="E71322"/>
</dbReference>
<dbReference type="RefSeq" id="WP_010881901.1">
    <property type="nucleotide sequence ID" value="NC_021490.2"/>
</dbReference>
<dbReference type="SMR" id="O83466"/>
<dbReference type="IntAct" id="O83466">
    <property type="interactions" value="3"/>
</dbReference>
<dbReference type="STRING" id="243276.TP_0452"/>
<dbReference type="EnsemblBacteria" id="AAC65439">
    <property type="protein sequence ID" value="AAC65439"/>
    <property type="gene ID" value="TP_0452"/>
</dbReference>
<dbReference type="GeneID" id="93876221"/>
<dbReference type="KEGG" id="tpa:TP_0452"/>
<dbReference type="KEGG" id="tpw:TPANIC_0452"/>
<dbReference type="eggNOG" id="COG0060">
    <property type="taxonomic scope" value="Bacteria"/>
</dbReference>
<dbReference type="HOGENOM" id="CLU_001493_1_1_12"/>
<dbReference type="OrthoDB" id="9810365at2"/>
<dbReference type="Proteomes" id="UP000000811">
    <property type="component" value="Chromosome"/>
</dbReference>
<dbReference type="GO" id="GO:0005737">
    <property type="term" value="C:cytoplasm"/>
    <property type="evidence" value="ECO:0007669"/>
    <property type="project" value="UniProtKB-SubCell"/>
</dbReference>
<dbReference type="GO" id="GO:0002161">
    <property type="term" value="F:aminoacyl-tRNA deacylase activity"/>
    <property type="evidence" value="ECO:0007669"/>
    <property type="project" value="InterPro"/>
</dbReference>
<dbReference type="GO" id="GO:0005524">
    <property type="term" value="F:ATP binding"/>
    <property type="evidence" value="ECO:0007669"/>
    <property type="project" value="UniProtKB-UniRule"/>
</dbReference>
<dbReference type="GO" id="GO:0004822">
    <property type="term" value="F:isoleucine-tRNA ligase activity"/>
    <property type="evidence" value="ECO:0007669"/>
    <property type="project" value="UniProtKB-UniRule"/>
</dbReference>
<dbReference type="GO" id="GO:0000049">
    <property type="term" value="F:tRNA binding"/>
    <property type="evidence" value="ECO:0007669"/>
    <property type="project" value="InterPro"/>
</dbReference>
<dbReference type="GO" id="GO:0008270">
    <property type="term" value="F:zinc ion binding"/>
    <property type="evidence" value="ECO:0007669"/>
    <property type="project" value="UniProtKB-UniRule"/>
</dbReference>
<dbReference type="GO" id="GO:0006428">
    <property type="term" value="P:isoleucyl-tRNA aminoacylation"/>
    <property type="evidence" value="ECO:0007669"/>
    <property type="project" value="UniProtKB-UniRule"/>
</dbReference>
<dbReference type="CDD" id="cd07961">
    <property type="entry name" value="Anticodon_Ia_Ile_ABEc"/>
    <property type="match status" value="1"/>
</dbReference>
<dbReference type="CDD" id="cd00818">
    <property type="entry name" value="IleRS_core"/>
    <property type="match status" value="1"/>
</dbReference>
<dbReference type="FunFam" id="3.40.50.620:FF:000063">
    <property type="entry name" value="Isoleucine--tRNA ligase"/>
    <property type="match status" value="1"/>
</dbReference>
<dbReference type="FunFam" id="3.40.50.620:FF:000075">
    <property type="entry name" value="Isoleucine--tRNA ligase"/>
    <property type="match status" value="1"/>
</dbReference>
<dbReference type="Gene3D" id="3.40.50.620">
    <property type="entry name" value="HUPs"/>
    <property type="match status" value="2"/>
</dbReference>
<dbReference type="Gene3D" id="1.10.730.10">
    <property type="entry name" value="Isoleucyl-tRNA Synthetase, Domain 1"/>
    <property type="match status" value="1"/>
</dbReference>
<dbReference type="HAMAP" id="MF_02003">
    <property type="entry name" value="Ile_tRNA_synth_type2"/>
    <property type="match status" value="1"/>
</dbReference>
<dbReference type="InterPro" id="IPR002300">
    <property type="entry name" value="aa-tRNA-synth_Ia"/>
</dbReference>
<dbReference type="InterPro" id="IPR033709">
    <property type="entry name" value="Anticodon_Ile_ABEc"/>
</dbReference>
<dbReference type="InterPro" id="IPR002301">
    <property type="entry name" value="Ile-tRNA-ligase"/>
</dbReference>
<dbReference type="InterPro" id="IPR023586">
    <property type="entry name" value="Ile-tRNA-ligase_type2"/>
</dbReference>
<dbReference type="InterPro" id="IPR013155">
    <property type="entry name" value="M/V/L/I-tRNA-synth_anticd-bd"/>
</dbReference>
<dbReference type="InterPro" id="IPR014729">
    <property type="entry name" value="Rossmann-like_a/b/a_fold"/>
</dbReference>
<dbReference type="InterPro" id="IPR009080">
    <property type="entry name" value="tRNAsynth_Ia_anticodon-bd"/>
</dbReference>
<dbReference type="InterPro" id="IPR009008">
    <property type="entry name" value="Val/Leu/Ile-tRNA-synth_edit"/>
</dbReference>
<dbReference type="NCBIfam" id="TIGR00392">
    <property type="entry name" value="ileS"/>
    <property type="match status" value="1"/>
</dbReference>
<dbReference type="PANTHER" id="PTHR42780:SF1">
    <property type="entry name" value="ISOLEUCINE--TRNA LIGASE, CYTOPLASMIC"/>
    <property type="match status" value="1"/>
</dbReference>
<dbReference type="PANTHER" id="PTHR42780">
    <property type="entry name" value="SOLEUCYL-TRNA SYNTHETASE"/>
    <property type="match status" value="1"/>
</dbReference>
<dbReference type="Pfam" id="PF08264">
    <property type="entry name" value="Anticodon_1"/>
    <property type="match status" value="1"/>
</dbReference>
<dbReference type="Pfam" id="PF19302">
    <property type="entry name" value="DUF5915"/>
    <property type="match status" value="1"/>
</dbReference>
<dbReference type="Pfam" id="PF00133">
    <property type="entry name" value="tRNA-synt_1"/>
    <property type="match status" value="1"/>
</dbReference>
<dbReference type="PRINTS" id="PR00984">
    <property type="entry name" value="TRNASYNTHILE"/>
</dbReference>
<dbReference type="SUPFAM" id="SSF47323">
    <property type="entry name" value="Anticodon-binding domain of a subclass of class I aminoacyl-tRNA synthetases"/>
    <property type="match status" value="1"/>
</dbReference>
<dbReference type="SUPFAM" id="SSF52374">
    <property type="entry name" value="Nucleotidylyl transferase"/>
    <property type="match status" value="1"/>
</dbReference>
<dbReference type="SUPFAM" id="SSF50677">
    <property type="entry name" value="ValRS/IleRS/LeuRS editing domain"/>
    <property type="match status" value="1"/>
</dbReference>
<organism>
    <name type="scientific">Treponema pallidum (strain Nichols)</name>
    <dbReference type="NCBI Taxonomy" id="243276"/>
    <lineage>
        <taxon>Bacteria</taxon>
        <taxon>Pseudomonadati</taxon>
        <taxon>Spirochaetota</taxon>
        <taxon>Spirochaetia</taxon>
        <taxon>Spirochaetales</taxon>
        <taxon>Treponemataceae</taxon>
        <taxon>Treponema</taxon>
    </lineage>
</organism>
<name>SYI_TREPA</name>
<feature type="chain" id="PRO_0000098569" description="Isoleucine--tRNA ligase">
    <location>
        <begin position="1"/>
        <end position="1091"/>
    </location>
</feature>
<feature type="short sequence motif" description="'HIGH' region">
    <location>
        <begin position="48"/>
        <end position="58"/>
    </location>
</feature>
<feature type="short sequence motif" description="'KMSKS' region">
    <location>
        <begin position="625"/>
        <end position="629"/>
    </location>
</feature>
<feature type="binding site" evidence="1">
    <location>
        <position position="628"/>
    </location>
    <ligand>
        <name>ATP</name>
        <dbReference type="ChEBI" id="CHEBI:30616"/>
    </ligand>
</feature>
<sequence>MYTPVDPKVDFVAQERRILAFWRERRVFEQSVAQRAQGKSYVFFDGPPFATGLPHFGHFVPSTIKDIIPRYQTMRGAYVPRRFGWDCHGLPIEHLIEQELNLNSKSDVESYGVSAFNAACRSSVLRYVKEWQRTLTRLGRWVDFDNDYKTMDVCYMESVWWVVAQLWQRKLLYEGYKILPYCPRCATALSNHELNLGGYQDVSDPAITVRFECTSVVPGSPAAREFCAAASWGSASLPAHTCFLAWTTTPWTLPCNAALALGPQILYVLIEANDEHYILARSRLEFYYPDSSAYRVVWEKRGEHLAGIRYRPLFSYPVFGQGPDPSVQGDSEEGLFCTRVADFVSTEDGTGVVHVAPAFGEDDYEVFKDAGISIQCPLDAECRFTAEVADYQGLFVKAADKAIIARVQKQGALFRREQISHAYPHCWRCASPLIYRAVHSWFVAVEKIKDKMLAANASICWQPSHIRDGRFGKWLVCARDWAISRDRYWGNPLPIWRCVHCGATDCIGSRTQLYERSGMLLEDLHKHVVDMVTIPCACGSVMRRVPEVLDCWFESGAMPYAQQHYPFEHATDFERYFPAHFISEGLDQTRGWFYTLTILAVALFERPAFENCIVTGLVLASDGKKMSKALRNYADPNEVMDRYGADALRLFLVRSAVVRADDLKYSDEGVKDILKTVIIPLWNSYSFYVTYANIDGIDPPVCAKVDGMGQAVTRLATHLNNPLDRWILSLTEKLVQDIACALDAYDVSKVADPIVSYVDQLNNWYIRRSRRRFWKSINDEDKRCAYNTLYCVLKRCVLAIAPVVPFITESIWQNIRAADDVQSVHLADYPVCTPMVRDDALEFKMETVQRVVSMARAIRAQCNLKVRQPLKAMQVITRNPMERSALLEMEEDVLDELNVKELVFHEKEDEIVEYRAKANFRVLGKELGSKTKRAALSIERLSSAEIQEILEGTTLYLDVDGDRLELTEEKILVQRIERESLKAINEGTLTVALDTTLTEDLLLEGAIRDLVRGVQNLRKERGFSLVDRICLRVFSSDQDIVCARKAYDLHRSYIVGETLAAHVQWARVRDGASAVYVKSDAVLWEVSIDKA</sequence>